<feature type="chain" id="PRO_0000132715" description="DNA-binding protein S1FA3">
    <location>
        <begin position="1"/>
        <end position="73"/>
    </location>
</feature>
<feature type="region of interest" description="Disordered" evidence="3">
    <location>
        <begin position="47"/>
        <end position="73"/>
    </location>
</feature>
<feature type="short sequence motif" description="Nuclear localization signal" evidence="2">
    <location>
        <begin position="47"/>
        <end position="52"/>
    </location>
</feature>
<feature type="compositionally biased region" description="Basic residues" evidence="3">
    <location>
        <begin position="47"/>
        <end position="63"/>
    </location>
</feature>
<sequence>MAAEFDGKIESKGLNPGLIVLLVIGGLLLTFLVGNFILYTYAQKNLPPRKKKPVSKKKMKKEKMKQGVQVPGE</sequence>
<keyword id="KW-0238">DNA-binding</keyword>
<keyword id="KW-0539">Nucleus</keyword>
<keyword id="KW-1185">Reference proteome</keyword>
<keyword id="KW-0678">Repressor</keyword>
<keyword id="KW-0804">Transcription</keyword>
<keyword id="KW-0805">Transcription regulation</keyword>
<proteinExistence type="inferred from homology"/>
<accession>Q93VI0</accession>
<protein>
    <recommendedName>
        <fullName>DNA-binding protein S1FA3</fullName>
    </recommendedName>
</protein>
<name>S1FA3_ARATH</name>
<reference key="1">
    <citation type="journal article" date="2000" name="Nature">
        <title>Sequence and analysis of chromosome 3 of the plant Arabidopsis thaliana.</title>
        <authorList>
            <person name="Salanoubat M."/>
            <person name="Lemcke K."/>
            <person name="Rieger M."/>
            <person name="Ansorge W."/>
            <person name="Unseld M."/>
            <person name="Fartmann B."/>
            <person name="Valle G."/>
            <person name="Bloecker H."/>
            <person name="Perez-Alonso M."/>
            <person name="Obermaier B."/>
            <person name="Delseny M."/>
            <person name="Boutry M."/>
            <person name="Grivell L.A."/>
            <person name="Mache R."/>
            <person name="Puigdomenech P."/>
            <person name="De Simone V."/>
            <person name="Choisne N."/>
            <person name="Artiguenave F."/>
            <person name="Robert C."/>
            <person name="Brottier P."/>
            <person name="Wincker P."/>
            <person name="Cattolico L."/>
            <person name="Weissenbach J."/>
            <person name="Saurin W."/>
            <person name="Quetier F."/>
            <person name="Schaefer M."/>
            <person name="Mueller-Auer S."/>
            <person name="Gabel C."/>
            <person name="Fuchs M."/>
            <person name="Benes V."/>
            <person name="Wurmbach E."/>
            <person name="Drzonek H."/>
            <person name="Erfle H."/>
            <person name="Jordan N."/>
            <person name="Bangert S."/>
            <person name="Wiedelmann R."/>
            <person name="Kranz H."/>
            <person name="Voss H."/>
            <person name="Holland R."/>
            <person name="Brandt P."/>
            <person name="Nyakatura G."/>
            <person name="Vezzi A."/>
            <person name="D'Angelo M."/>
            <person name="Pallavicini A."/>
            <person name="Toppo S."/>
            <person name="Simionati B."/>
            <person name="Conrad A."/>
            <person name="Hornischer K."/>
            <person name="Kauer G."/>
            <person name="Loehnert T.-H."/>
            <person name="Nordsiek G."/>
            <person name="Reichelt J."/>
            <person name="Scharfe M."/>
            <person name="Schoen O."/>
            <person name="Bargues M."/>
            <person name="Terol J."/>
            <person name="Climent J."/>
            <person name="Navarro P."/>
            <person name="Collado C."/>
            <person name="Perez-Perez A."/>
            <person name="Ottenwaelder B."/>
            <person name="Duchemin D."/>
            <person name="Cooke R."/>
            <person name="Laudie M."/>
            <person name="Berger-Llauro C."/>
            <person name="Purnelle B."/>
            <person name="Masuy D."/>
            <person name="de Haan M."/>
            <person name="Maarse A.C."/>
            <person name="Alcaraz J.-P."/>
            <person name="Cottet A."/>
            <person name="Casacuberta E."/>
            <person name="Monfort A."/>
            <person name="Argiriou A."/>
            <person name="Flores M."/>
            <person name="Liguori R."/>
            <person name="Vitale D."/>
            <person name="Mannhaupt G."/>
            <person name="Haase D."/>
            <person name="Schoof H."/>
            <person name="Rudd S."/>
            <person name="Zaccaria P."/>
            <person name="Mewes H.-W."/>
            <person name="Mayer K.F.X."/>
            <person name="Kaul S."/>
            <person name="Town C.D."/>
            <person name="Koo H.L."/>
            <person name="Tallon L.J."/>
            <person name="Jenkins J."/>
            <person name="Rooney T."/>
            <person name="Rizzo M."/>
            <person name="Walts A."/>
            <person name="Utterback T."/>
            <person name="Fujii C.Y."/>
            <person name="Shea T.P."/>
            <person name="Creasy T.H."/>
            <person name="Haas B."/>
            <person name="Maiti R."/>
            <person name="Wu D."/>
            <person name="Peterson J."/>
            <person name="Van Aken S."/>
            <person name="Pai G."/>
            <person name="Militscher J."/>
            <person name="Sellers P."/>
            <person name="Gill J.E."/>
            <person name="Feldblyum T.V."/>
            <person name="Preuss D."/>
            <person name="Lin X."/>
            <person name="Nierman W.C."/>
            <person name="Salzberg S.L."/>
            <person name="White O."/>
            <person name="Venter J.C."/>
            <person name="Fraser C.M."/>
            <person name="Kaneko T."/>
            <person name="Nakamura Y."/>
            <person name="Sato S."/>
            <person name="Kato T."/>
            <person name="Asamizu E."/>
            <person name="Sasamoto S."/>
            <person name="Kimura T."/>
            <person name="Idesawa K."/>
            <person name="Kawashima K."/>
            <person name="Kishida Y."/>
            <person name="Kiyokawa C."/>
            <person name="Kohara M."/>
            <person name="Matsumoto M."/>
            <person name="Matsuno A."/>
            <person name="Muraki A."/>
            <person name="Nakayama S."/>
            <person name="Nakazaki N."/>
            <person name="Shinpo S."/>
            <person name="Takeuchi C."/>
            <person name="Wada T."/>
            <person name="Watanabe A."/>
            <person name="Yamada M."/>
            <person name="Yasuda M."/>
            <person name="Tabata S."/>
        </authorList>
    </citation>
    <scope>NUCLEOTIDE SEQUENCE [LARGE SCALE GENOMIC DNA]</scope>
    <source>
        <strain>cv. Columbia</strain>
    </source>
</reference>
<reference key="2">
    <citation type="journal article" date="2017" name="Plant J.">
        <title>Araport11: a complete reannotation of the Arabidopsis thaliana reference genome.</title>
        <authorList>
            <person name="Cheng C.Y."/>
            <person name="Krishnakumar V."/>
            <person name="Chan A.P."/>
            <person name="Thibaud-Nissen F."/>
            <person name="Schobel S."/>
            <person name="Town C.D."/>
        </authorList>
    </citation>
    <scope>GENOME REANNOTATION</scope>
    <source>
        <strain>cv. Columbia</strain>
    </source>
</reference>
<reference key="3">
    <citation type="journal article" date="2002" name="Science">
        <title>Functional annotation of a full-length Arabidopsis cDNA collection.</title>
        <authorList>
            <person name="Seki M."/>
            <person name="Narusaka M."/>
            <person name="Kamiya A."/>
            <person name="Ishida J."/>
            <person name="Satou M."/>
            <person name="Sakurai T."/>
            <person name="Nakajima M."/>
            <person name="Enju A."/>
            <person name="Akiyama K."/>
            <person name="Oono Y."/>
            <person name="Muramatsu M."/>
            <person name="Hayashizaki Y."/>
            <person name="Kawai J."/>
            <person name="Carninci P."/>
            <person name="Itoh M."/>
            <person name="Ishii Y."/>
            <person name="Arakawa T."/>
            <person name="Shibata K."/>
            <person name="Shinagawa A."/>
            <person name="Shinozaki K."/>
        </authorList>
    </citation>
    <scope>NUCLEOTIDE SEQUENCE [LARGE SCALE MRNA]</scope>
    <source>
        <strain>cv. Columbia</strain>
    </source>
</reference>
<reference key="4">
    <citation type="journal article" date="2003" name="Science">
        <title>Empirical analysis of transcriptional activity in the Arabidopsis genome.</title>
        <authorList>
            <person name="Yamada K."/>
            <person name="Lim J."/>
            <person name="Dale J.M."/>
            <person name="Chen H."/>
            <person name="Shinn P."/>
            <person name="Palm C.J."/>
            <person name="Southwick A.M."/>
            <person name="Wu H.C."/>
            <person name="Kim C.J."/>
            <person name="Nguyen M."/>
            <person name="Pham P.K."/>
            <person name="Cheuk R.F."/>
            <person name="Karlin-Newmann G."/>
            <person name="Liu S.X."/>
            <person name="Lam B."/>
            <person name="Sakano H."/>
            <person name="Wu T."/>
            <person name="Yu G."/>
            <person name="Miranda M."/>
            <person name="Quach H.L."/>
            <person name="Tripp M."/>
            <person name="Chang C.H."/>
            <person name="Lee J.M."/>
            <person name="Toriumi M.J."/>
            <person name="Chan M.M."/>
            <person name="Tang C.C."/>
            <person name="Onodera C.S."/>
            <person name="Deng J.M."/>
            <person name="Akiyama K."/>
            <person name="Ansari Y."/>
            <person name="Arakawa T."/>
            <person name="Banh J."/>
            <person name="Banno F."/>
            <person name="Bowser L."/>
            <person name="Brooks S.Y."/>
            <person name="Carninci P."/>
            <person name="Chao Q."/>
            <person name="Choy N."/>
            <person name="Enju A."/>
            <person name="Goldsmith A.D."/>
            <person name="Gurjal M."/>
            <person name="Hansen N.F."/>
            <person name="Hayashizaki Y."/>
            <person name="Johnson-Hopson C."/>
            <person name="Hsuan V.W."/>
            <person name="Iida K."/>
            <person name="Karnes M."/>
            <person name="Khan S."/>
            <person name="Koesema E."/>
            <person name="Ishida J."/>
            <person name="Jiang P.X."/>
            <person name="Jones T."/>
            <person name="Kawai J."/>
            <person name="Kamiya A."/>
            <person name="Meyers C."/>
            <person name="Nakajima M."/>
            <person name="Narusaka M."/>
            <person name="Seki M."/>
            <person name="Sakurai T."/>
            <person name="Satou M."/>
            <person name="Tamse R."/>
            <person name="Vaysberg M."/>
            <person name="Wallender E.K."/>
            <person name="Wong C."/>
            <person name="Yamamura Y."/>
            <person name="Yuan S."/>
            <person name="Shinozaki K."/>
            <person name="Davis R.W."/>
            <person name="Theologis A."/>
            <person name="Ecker J.R."/>
        </authorList>
    </citation>
    <scope>NUCLEOTIDE SEQUENCE [LARGE SCALE MRNA]</scope>
    <source>
        <strain>cv. Columbia</strain>
    </source>
</reference>
<reference key="5">
    <citation type="submission" date="2002-03" db="EMBL/GenBank/DDBJ databases">
        <title>Full-length cDNA from Arabidopsis thaliana.</title>
        <authorList>
            <person name="Brover V.V."/>
            <person name="Troukhan M.E."/>
            <person name="Alexandrov N.A."/>
            <person name="Lu Y.-P."/>
            <person name="Flavell R.B."/>
            <person name="Feldmann K.A."/>
        </authorList>
    </citation>
    <scope>NUCLEOTIDE SEQUENCE [LARGE SCALE MRNA]</scope>
</reference>
<dbReference type="EMBL" id="AC016661">
    <property type="status" value="NOT_ANNOTATED_CDS"/>
    <property type="molecule type" value="Genomic_DNA"/>
</dbReference>
<dbReference type="EMBL" id="CP002686">
    <property type="protein sequence ID" value="AEE74806.1"/>
    <property type="molecule type" value="Genomic_DNA"/>
</dbReference>
<dbReference type="EMBL" id="AK118970">
    <property type="protein sequence ID" value="BAC43547.1"/>
    <property type="molecule type" value="mRNA"/>
</dbReference>
<dbReference type="EMBL" id="AF380629">
    <property type="protein sequence ID" value="AAK55710.1"/>
    <property type="molecule type" value="mRNA"/>
</dbReference>
<dbReference type="EMBL" id="AY054129">
    <property type="protein sequence ID" value="AAL06790.1"/>
    <property type="molecule type" value="mRNA"/>
</dbReference>
<dbReference type="EMBL" id="AY087186">
    <property type="protein sequence ID" value="AAM64742.1"/>
    <property type="molecule type" value="mRNA"/>
</dbReference>
<dbReference type="RefSeq" id="NP_566353.1">
    <property type="nucleotide sequence ID" value="NM_111808.4"/>
</dbReference>
<dbReference type="SMR" id="Q93VI0"/>
<dbReference type="BioGRID" id="5465">
    <property type="interactions" value="1"/>
</dbReference>
<dbReference type="FunCoup" id="Q93VI0">
    <property type="interactions" value="3"/>
</dbReference>
<dbReference type="IntAct" id="Q93VI0">
    <property type="interactions" value="1"/>
</dbReference>
<dbReference type="STRING" id="3702.Q93VI0"/>
<dbReference type="PaxDb" id="3702-AT3G09735.1"/>
<dbReference type="ProteomicsDB" id="232723"/>
<dbReference type="EnsemblPlants" id="AT3G09735.1">
    <property type="protein sequence ID" value="AT3G09735.1"/>
    <property type="gene ID" value="AT3G09735"/>
</dbReference>
<dbReference type="GeneID" id="820131"/>
<dbReference type="Gramene" id="AT3G09735.1">
    <property type="protein sequence ID" value="AT3G09735.1"/>
    <property type="gene ID" value="AT3G09735"/>
</dbReference>
<dbReference type="KEGG" id="ath:AT3G09735"/>
<dbReference type="Araport" id="AT3G09735"/>
<dbReference type="TAIR" id="AT3G09735"/>
<dbReference type="eggNOG" id="ENOG502S3X9">
    <property type="taxonomic scope" value="Eukaryota"/>
</dbReference>
<dbReference type="HOGENOM" id="CLU_172811_0_0_1"/>
<dbReference type="InParanoid" id="Q93VI0"/>
<dbReference type="OMA" id="KMKQGVQ"/>
<dbReference type="PRO" id="PR:Q93VI0"/>
<dbReference type="Proteomes" id="UP000006548">
    <property type="component" value="Chromosome 3"/>
</dbReference>
<dbReference type="ExpressionAtlas" id="Q93VI0">
    <property type="expression patterns" value="baseline and differential"/>
</dbReference>
<dbReference type="GO" id="GO:0005634">
    <property type="term" value="C:nucleus"/>
    <property type="evidence" value="ECO:0007669"/>
    <property type="project" value="UniProtKB-SubCell"/>
</dbReference>
<dbReference type="GO" id="GO:0003677">
    <property type="term" value="F:DNA binding"/>
    <property type="evidence" value="ECO:0007669"/>
    <property type="project" value="UniProtKB-KW"/>
</dbReference>
<dbReference type="GO" id="GO:0006355">
    <property type="term" value="P:regulation of DNA-templated transcription"/>
    <property type="evidence" value="ECO:0007669"/>
    <property type="project" value="InterPro"/>
</dbReference>
<dbReference type="InterPro" id="IPR006779">
    <property type="entry name" value="S1FA_DNA-bd"/>
</dbReference>
<dbReference type="PANTHER" id="PTHR35298">
    <property type="entry name" value="DNA-BINDING PROTEIN S1FA2"/>
    <property type="match status" value="1"/>
</dbReference>
<dbReference type="PANTHER" id="PTHR35298:SF5">
    <property type="entry name" value="DNA-BINDING PROTEIN S1FA3"/>
    <property type="match status" value="1"/>
</dbReference>
<dbReference type="Pfam" id="PF04689">
    <property type="entry name" value="S1FA"/>
    <property type="match status" value="1"/>
</dbReference>
<organism>
    <name type="scientific">Arabidopsis thaliana</name>
    <name type="common">Mouse-ear cress</name>
    <dbReference type="NCBI Taxonomy" id="3702"/>
    <lineage>
        <taxon>Eukaryota</taxon>
        <taxon>Viridiplantae</taxon>
        <taxon>Streptophyta</taxon>
        <taxon>Embryophyta</taxon>
        <taxon>Tracheophyta</taxon>
        <taxon>Spermatophyta</taxon>
        <taxon>Magnoliopsida</taxon>
        <taxon>eudicotyledons</taxon>
        <taxon>Gunneridae</taxon>
        <taxon>Pentapetalae</taxon>
        <taxon>rosids</taxon>
        <taxon>malvids</taxon>
        <taxon>Brassicales</taxon>
        <taxon>Brassicaceae</taxon>
        <taxon>Camelineae</taxon>
        <taxon>Arabidopsis</taxon>
    </lineage>
</organism>
<comment type="function">
    <text evidence="1">DNA-binding protein that specifically recognizes a negative element (S1F) within the RPS1 promoter.</text>
</comment>
<comment type="subcellular location">
    <subcellularLocation>
        <location evidence="4">Nucleus</location>
    </subcellularLocation>
</comment>
<comment type="similarity">
    <text evidence="4">Belongs to the S1FA transcription factor family.</text>
</comment>
<gene>
    <name type="primary">S1FA3</name>
    <name type="ordered locus">At3g09735</name>
    <name type="ORF">F11F8.8</name>
</gene>
<evidence type="ECO:0000250" key="1"/>
<evidence type="ECO:0000255" key="2"/>
<evidence type="ECO:0000256" key="3">
    <source>
        <dbReference type="SAM" id="MobiDB-lite"/>
    </source>
</evidence>
<evidence type="ECO:0000305" key="4"/>